<reference key="1">
    <citation type="journal article" date="2007" name="PLoS ONE">
        <title>Paradoxical DNA repair and peroxide resistance gene conservation in Bacillus pumilus SAFR-032.</title>
        <authorList>
            <person name="Gioia J."/>
            <person name="Yerrapragada S."/>
            <person name="Qin X."/>
            <person name="Jiang H."/>
            <person name="Igboeli O.C."/>
            <person name="Muzny D."/>
            <person name="Dugan-Rocha S."/>
            <person name="Ding Y."/>
            <person name="Hawes A."/>
            <person name="Liu W."/>
            <person name="Perez L."/>
            <person name="Kovar C."/>
            <person name="Dinh H."/>
            <person name="Lee S."/>
            <person name="Nazareth L."/>
            <person name="Blyth P."/>
            <person name="Holder M."/>
            <person name="Buhay C."/>
            <person name="Tirumalai M.R."/>
            <person name="Liu Y."/>
            <person name="Dasgupta I."/>
            <person name="Bokhetache L."/>
            <person name="Fujita M."/>
            <person name="Karouia F."/>
            <person name="Eswara Moorthy P."/>
            <person name="Siefert J."/>
            <person name="Uzman A."/>
            <person name="Buzumbo P."/>
            <person name="Verma A."/>
            <person name="Zwiya H."/>
            <person name="McWilliams B.D."/>
            <person name="Olowu A."/>
            <person name="Clinkenbeard K.D."/>
            <person name="Newcombe D."/>
            <person name="Golebiewski L."/>
            <person name="Petrosino J.F."/>
            <person name="Nicholson W.L."/>
            <person name="Fox G.E."/>
            <person name="Venkateswaran K."/>
            <person name="Highlander S.K."/>
            <person name="Weinstock G.M."/>
        </authorList>
    </citation>
    <scope>NUCLEOTIDE SEQUENCE [LARGE SCALE GENOMIC DNA]</scope>
    <source>
        <strain>SAFR-032</strain>
    </source>
</reference>
<name>SYFA_BACP2</name>
<accession>A8FG17</accession>
<keyword id="KW-0030">Aminoacyl-tRNA synthetase</keyword>
<keyword id="KW-0067">ATP-binding</keyword>
<keyword id="KW-0963">Cytoplasm</keyword>
<keyword id="KW-0436">Ligase</keyword>
<keyword id="KW-0460">Magnesium</keyword>
<keyword id="KW-0479">Metal-binding</keyword>
<keyword id="KW-0547">Nucleotide-binding</keyword>
<keyword id="KW-0648">Protein biosynthesis</keyword>
<sequence length="344" mass="38621">MQETLKQLETEAIAKVEAASSLKEVNDIRVQYLGKKGPITEVLRGMGKLSAEERPKMGALANEVREQIAGAIAEKNEQLEKEEVKKKLASQTIDVTLPANPIKIGARHPLTIVVEDIEDLFIGMGYTVEEGPEVETDYYNFEALNLPKEHPARDMQDSFYITEDTLLRTQTSPVQARTLEKYKGQGPVKIICPGKVYRRDSDDATHSHQFMQIEGLVVDHNISMSDLKGTLETVARKMFGEDREIRLRPSFFPFTEPSVEVDVSCFKCGGKGCSVCKGTGWIEILGAGMVHPNVLKMSGFDPETYQGFAFGMGVERIAMLKYGIDDIRHFYTNDIRFTKQFKQD</sequence>
<protein>
    <recommendedName>
        <fullName evidence="1">Phenylalanine--tRNA ligase alpha subunit</fullName>
        <ecNumber evidence="1">6.1.1.20</ecNumber>
    </recommendedName>
    <alternativeName>
        <fullName evidence="1">Phenylalanyl-tRNA synthetase alpha subunit</fullName>
        <shortName evidence="1">PheRS</shortName>
    </alternativeName>
</protein>
<dbReference type="EC" id="6.1.1.20" evidence="1"/>
<dbReference type="EMBL" id="CP000813">
    <property type="protein sequence ID" value="ABV63184.1"/>
    <property type="molecule type" value="Genomic_DNA"/>
</dbReference>
<dbReference type="RefSeq" id="WP_012010834.1">
    <property type="nucleotide sequence ID" value="NZ_VEIS01000006.1"/>
</dbReference>
<dbReference type="SMR" id="A8FG17"/>
<dbReference type="STRING" id="315750.BPUM_2522"/>
<dbReference type="GeneID" id="5621787"/>
<dbReference type="KEGG" id="bpu:BPUM_2522"/>
<dbReference type="eggNOG" id="COG0016">
    <property type="taxonomic scope" value="Bacteria"/>
</dbReference>
<dbReference type="HOGENOM" id="CLU_025086_0_1_9"/>
<dbReference type="OrthoDB" id="9800719at2"/>
<dbReference type="Proteomes" id="UP000001355">
    <property type="component" value="Chromosome"/>
</dbReference>
<dbReference type="GO" id="GO:0005737">
    <property type="term" value="C:cytoplasm"/>
    <property type="evidence" value="ECO:0007669"/>
    <property type="project" value="UniProtKB-SubCell"/>
</dbReference>
<dbReference type="GO" id="GO:0005524">
    <property type="term" value="F:ATP binding"/>
    <property type="evidence" value="ECO:0007669"/>
    <property type="project" value="UniProtKB-UniRule"/>
</dbReference>
<dbReference type="GO" id="GO:0140096">
    <property type="term" value="F:catalytic activity, acting on a protein"/>
    <property type="evidence" value="ECO:0007669"/>
    <property type="project" value="UniProtKB-ARBA"/>
</dbReference>
<dbReference type="GO" id="GO:0000287">
    <property type="term" value="F:magnesium ion binding"/>
    <property type="evidence" value="ECO:0007669"/>
    <property type="project" value="UniProtKB-UniRule"/>
</dbReference>
<dbReference type="GO" id="GO:0004826">
    <property type="term" value="F:phenylalanine-tRNA ligase activity"/>
    <property type="evidence" value="ECO:0007669"/>
    <property type="project" value="UniProtKB-UniRule"/>
</dbReference>
<dbReference type="GO" id="GO:0016740">
    <property type="term" value="F:transferase activity"/>
    <property type="evidence" value="ECO:0007669"/>
    <property type="project" value="UniProtKB-ARBA"/>
</dbReference>
<dbReference type="GO" id="GO:0000049">
    <property type="term" value="F:tRNA binding"/>
    <property type="evidence" value="ECO:0007669"/>
    <property type="project" value="InterPro"/>
</dbReference>
<dbReference type="GO" id="GO:0006432">
    <property type="term" value="P:phenylalanyl-tRNA aminoacylation"/>
    <property type="evidence" value="ECO:0007669"/>
    <property type="project" value="UniProtKB-UniRule"/>
</dbReference>
<dbReference type="CDD" id="cd00496">
    <property type="entry name" value="PheRS_alpha_core"/>
    <property type="match status" value="1"/>
</dbReference>
<dbReference type="FunFam" id="3.30.930.10:FF:000003">
    <property type="entry name" value="Phenylalanine--tRNA ligase alpha subunit"/>
    <property type="match status" value="1"/>
</dbReference>
<dbReference type="Gene3D" id="3.30.930.10">
    <property type="entry name" value="Bira Bifunctional Protein, Domain 2"/>
    <property type="match status" value="1"/>
</dbReference>
<dbReference type="HAMAP" id="MF_00281">
    <property type="entry name" value="Phe_tRNA_synth_alpha1"/>
    <property type="match status" value="1"/>
</dbReference>
<dbReference type="InterPro" id="IPR006195">
    <property type="entry name" value="aa-tRNA-synth_II"/>
</dbReference>
<dbReference type="InterPro" id="IPR045864">
    <property type="entry name" value="aa-tRNA-synth_II/BPL/LPL"/>
</dbReference>
<dbReference type="InterPro" id="IPR004529">
    <property type="entry name" value="Phe-tRNA-synth_IIc_asu"/>
</dbReference>
<dbReference type="InterPro" id="IPR004188">
    <property type="entry name" value="Phe-tRNA_ligase_II_N"/>
</dbReference>
<dbReference type="InterPro" id="IPR022911">
    <property type="entry name" value="Phe_tRNA_ligase_alpha1_bac"/>
</dbReference>
<dbReference type="InterPro" id="IPR002319">
    <property type="entry name" value="Phenylalanyl-tRNA_Synthase"/>
</dbReference>
<dbReference type="InterPro" id="IPR010978">
    <property type="entry name" value="tRNA-bd_arm"/>
</dbReference>
<dbReference type="NCBIfam" id="TIGR00468">
    <property type="entry name" value="pheS"/>
    <property type="match status" value="1"/>
</dbReference>
<dbReference type="PANTHER" id="PTHR11538:SF41">
    <property type="entry name" value="PHENYLALANINE--TRNA LIGASE, MITOCHONDRIAL"/>
    <property type="match status" value="1"/>
</dbReference>
<dbReference type="PANTHER" id="PTHR11538">
    <property type="entry name" value="PHENYLALANYL-TRNA SYNTHETASE"/>
    <property type="match status" value="1"/>
</dbReference>
<dbReference type="Pfam" id="PF02912">
    <property type="entry name" value="Phe_tRNA-synt_N"/>
    <property type="match status" value="1"/>
</dbReference>
<dbReference type="Pfam" id="PF01409">
    <property type="entry name" value="tRNA-synt_2d"/>
    <property type="match status" value="1"/>
</dbReference>
<dbReference type="SUPFAM" id="SSF55681">
    <property type="entry name" value="Class II aaRS and biotin synthetases"/>
    <property type="match status" value="1"/>
</dbReference>
<dbReference type="SUPFAM" id="SSF46589">
    <property type="entry name" value="tRNA-binding arm"/>
    <property type="match status" value="1"/>
</dbReference>
<dbReference type="PROSITE" id="PS50862">
    <property type="entry name" value="AA_TRNA_LIGASE_II"/>
    <property type="match status" value="1"/>
</dbReference>
<organism>
    <name type="scientific">Bacillus pumilus (strain SAFR-032)</name>
    <dbReference type="NCBI Taxonomy" id="315750"/>
    <lineage>
        <taxon>Bacteria</taxon>
        <taxon>Bacillati</taxon>
        <taxon>Bacillota</taxon>
        <taxon>Bacilli</taxon>
        <taxon>Bacillales</taxon>
        <taxon>Bacillaceae</taxon>
        <taxon>Bacillus</taxon>
    </lineage>
</organism>
<gene>
    <name evidence="1" type="primary">pheS</name>
    <name type="ordered locus">BPUM_2522</name>
</gene>
<comment type="catalytic activity">
    <reaction evidence="1">
        <text>tRNA(Phe) + L-phenylalanine + ATP = L-phenylalanyl-tRNA(Phe) + AMP + diphosphate + H(+)</text>
        <dbReference type="Rhea" id="RHEA:19413"/>
        <dbReference type="Rhea" id="RHEA-COMP:9668"/>
        <dbReference type="Rhea" id="RHEA-COMP:9699"/>
        <dbReference type="ChEBI" id="CHEBI:15378"/>
        <dbReference type="ChEBI" id="CHEBI:30616"/>
        <dbReference type="ChEBI" id="CHEBI:33019"/>
        <dbReference type="ChEBI" id="CHEBI:58095"/>
        <dbReference type="ChEBI" id="CHEBI:78442"/>
        <dbReference type="ChEBI" id="CHEBI:78531"/>
        <dbReference type="ChEBI" id="CHEBI:456215"/>
        <dbReference type="EC" id="6.1.1.20"/>
    </reaction>
</comment>
<comment type="cofactor">
    <cofactor evidence="1">
        <name>Mg(2+)</name>
        <dbReference type="ChEBI" id="CHEBI:18420"/>
    </cofactor>
    <text evidence="1">Binds 2 magnesium ions per tetramer.</text>
</comment>
<comment type="subunit">
    <text evidence="1">Tetramer of two alpha and two beta subunits.</text>
</comment>
<comment type="subcellular location">
    <subcellularLocation>
        <location evidence="1">Cytoplasm</location>
    </subcellularLocation>
</comment>
<comment type="similarity">
    <text evidence="1">Belongs to the class-II aminoacyl-tRNA synthetase family. Phe-tRNA synthetase alpha subunit type 1 subfamily.</text>
</comment>
<feature type="chain" id="PRO_1000059235" description="Phenylalanine--tRNA ligase alpha subunit">
    <location>
        <begin position="1"/>
        <end position="344"/>
    </location>
</feature>
<feature type="binding site" evidence="1">
    <location>
        <position position="256"/>
    </location>
    <ligand>
        <name>Mg(2+)</name>
        <dbReference type="ChEBI" id="CHEBI:18420"/>
        <note>shared with beta subunit</note>
    </ligand>
</feature>
<evidence type="ECO:0000255" key="1">
    <source>
        <dbReference type="HAMAP-Rule" id="MF_00281"/>
    </source>
</evidence>
<proteinExistence type="inferred from homology"/>